<feature type="chain" id="PRO_0000318445" description="Protein translocase subunit SecA">
    <location>
        <begin position="1"/>
        <end position="837"/>
    </location>
</feature>
<feature type="binding site" evidence="1">
    <location>
        <position position="85"/>
    </location>
    <ligand>
        <name>ATP</name>
        <dbReference type="ChEBI" id="CHEBI:30616"/>
    </ligand>
</feature>
<feature type="binding site" evidence="1">
    <location>
        <begin position="103"/>
        <end position="107"/>
    </location>
    <ligand>
        <name>ATP</name>
        <dbReference type="ChEBI" id="CHEBI:30616"/>
    </ligand>
</feature>
<feature type="binding site" evidence="1">
    <location>
        <position position="493"/>
    </location>
    <ligand>
        <name>ATP</name>
        <dbReference type="ChEBI" id="CHEBI:30616"/>
    </ligand>
</feature>
<feature type="binding site" evidence="1">
    <location>
        <position position="821"/>
    </location>
    <ligand>
        <name>Zn(2+)</name>
        <dbReference type="ChEBI" id="CHEBI:29105"/>
    </ligand>
</feature>
<feature type="binding site" evidence="1">
    <location>
        <position position="823"/>
    </location>
    <ligand>
        <name>Zn(2+)</name>
        <dbReference type="ChEBI" id="CHEBI:29105"/>
    </ligand>
</feature>
<feature type="binding site" evidence="1">
    <location>
        <position position="832"/>
    </location>
    <ligand>
        <name>Zn(2+)</name>
        <dbReference type="ChEBI" id="CHEBI:29105"/>
    </ligand>
</feature>
<feature type="binding site" evidence="1">
    <location>
        <position position="833"/>
    </location>
    <ligand>
        <name>Zn(2+)</name>
        <dbReference type="ChEBI" id="CHEBI:29105"/>
    </ligand>
</feature>
<evidence type="ECO:0000255" key="1">
    <source>
        <dbReference type="HAMAP-Rule" id="MF_01382"/>
    </source>
</evidence>
<protein>
    <recommendedName>
        <fullName evidence="1">Protein translocase subunit SecA</fullName>
        <ecNumber evidence="1">7.4.2.8</ecNumber>
    </recommendedName>
</protein>
<sequence>MANILKTIIENDKGEIRRLEKMADKVFKYEDQMAALTDDQLKAKTVEFKERYQNGESLDSLLYEAFAVVREGAKRVLGLFPYKVQVMGGIVLHHGDVPEMRTGEGKTLTATMPVYLNALSGKGVHVVTVNEYLSERDATEMGELYSWLGLSVGINLATKSPMEKKEAYECDITYSTNSEIGFDYLRDNMVVRAENMVQRPLNYALVDEVDSILIDEARTPLIVSGANAVETSQLYHMADHYVKSLNKDDYIIDVQSKTIGLSDSGIDRAESYFKLENLYDIENVALTHFIDNALRANYIMLLDIDYVVSEEQEILIVDQFTGRTMEGRRYSDGLHQAIEAKEGVPIQDETKTSASITYQNLFRMYKKLSGMTGTGKTEEEEFREIYNIRVIPIPTNRPVQRIDHSDLLYASIESKFKAVVEDVKARYQKGQPVLVGTVAVETSDYISKKLVAAGVPHEVLNAKNHYREAQIIMNAGQRGAVTIATNMAGRGTDIKLGEGVRELGGLCVIGTERHESRRIDNQLRGRSGRQGDPGESQFYLSLEDDLMKRFGSERLKGIFERLNMSEEAIESRMLTRQVEAAQKRVEGNNYDTRKQVLQYDDVMREQREIIYAQRYDVITADRDLAPEIQAMIKRTIERVVDGHARAKQDEKLEAILNFAKYNLLPEDSITMEDLSGLSDKAIKEELFQRALKVYDSQVSKLRDEEAVKEFQKVLILRVVDNKWTDHIDALDQLRNAVGLRGYAQNNPVVEYQAEGFRMFNDMIGSIEFDVTRLMMKAQIHEQERPQAERHISTTATRNIAAHQASMPEDLDLNQIGRNELCPCGSGKKFKNCHGKRQ</sequence>
<name>SECA_STRP2</name>
<gene>
    <name evidence="1" type="primary">secA</name>
    <name type="ordered locus">SPD_1512</name>
</gene>
<reference key="1">
    <citation type="journal article" date="2007" name="J. Bacteriol.">
        <title>Genome sequence of Avery's virulent serotype 2 strain D39 of Streptococcus pneumoniae and comparison with that of unencapsulated laboratory strain R6.</title>
        <authorList>
            <person name="Lanie J.A."/>
            <person name="Ng W.-L."/>
            <person name="Kazmierczak K.M."/>
            <person name="Andrzejewski T.M."/>
            <person name="Davidsen T.M."/>
            <person name="Wayne K.J."/>
            <person name="Tettelin H."/>
            <person name="Glass J.I."/>
            <person name="Winkler M.E."/>
        </authorList>
    </citation>
    <scope>NUCLEOTIDE SEQUENCE [LARGE SCALE GENOMIC DNA]</scope>
    <source>
        <strain>D39 / NCTC 7466</strain>
    </source>
</reference>
<comment type="function">
    <text evidence="1">Part of the Sec protein translocase complex. Interacts with the SecYEG preprotein conducting channel. Has a central role in coupling the hydrolysis of ATP to the transfer of proteins into and across the cell membrane, serving as an ATP-driven molecular motor driving the stepwise translocation of polypeptide chains across the membrane.</text>
</comment>
<comment type="catalytic activity">
    <reaction evidence="1">
        <text>ATP + H2O + cellular proteinSide 1 = ADP + phosphate + cellular proteinSide 2.</text>
        <dbReference type="EC" id="7.4.2.8"/>
    </reaction>
</comment>
<comment type="cofactor">
    <cofactor evidence="1">
        <name>Zn(2+)</name>
        <dbReference type="ChEBI" id="CHEBI:29105"/>
    </cofactor>
    <text evidence="1">May bind 1 zinc ion per subunit.</text>
</comment>
<comment type="subunit">
    <text evidence="1">Monomer and homodimer. Part of the essential Sec protein translocation apparatus which comprises SecA, SecYEG and auxiliary proteins SecDF. Other proteins may also be involved.</text>
</comment>
<comment type="subcellular location">
    <subcellularLocation>
        <location evidence="1">Cell membrane</location>
        <topology evidence="1">Peripheral membrane protein</topology>
        <orientation evidence="1">Cytoplasmic side</orientation>
    </subcellularLocation>
    <subcellularLocation>
        <location evidence="1">Cytoplasm</location>
    </subcellularLocation>
    <text evidence="1">Distribution is 50-50.</text>
</comment>
<comment type="similarity">
    <text evidence="1">Belongs to the SecA family.</text>
</comment>
<keyword id="KW-0067">ATP-binding</keyword>
<keyword id="KW-1003">Cell membrane</keyword>
<keyword id="KW-0963">Cytoplasm</keyword>
<keyword id="KW-0472">Membrane</keyword>
<keyword id="KW-0479">Metal-binding</keyword>
<keyword id="KW-0547">Nucleotide-binding</keyword>
<keyword id="KW-0653">Protein transport</keyword>
<keyword id="KW-1185">Reference proteome</keyword>
<keyword id="KW-1278">Translocase</keyword>
<keyword id="KW-0811">Translocation</keyword>
<keyword id="KW-0813">Transport</keyword>
<keyword id="KW-0862">Zinc</keyword>
<accession>Q04J70</accession>
<organism>
    <name type="scientific">Streptococcus pneumoniae serotype 2 (strain D39 / NCTC 7466)</name>
    <dbReference type="NCBI Taxonomy" id="373153"/>
    <lineage>
        <taxon>Bacteria</taxon>
        <taxon>Bacillati</taxon>
        <taxon>Bacillota</taxon>
        <taxon>Bacilli</taxon>
        <taxon>Lactobacillales</taxon>
        <taxon>Streptococcaceae</taxon>
        <taxon>Streptococcus</taxon>
    </lineage>
</organism>
<proteinExistence type="inferred from homology"/>
<dbReference type="EC" id="7.4.2.8" evidence="1"/>
<dbReference type="EMBL" id="CP000410">
    <property type="protein sequence ID" value="ABJ53706.1"/>
    <property type="molecule type" value="Genomic_DNA"/>
</dbReference>
<dbReference type="RefSeq" id="WP_001274085.1">
    <property type="nucleotide sequence ID" value="NZ_JAMLJR010000003.1"/>
</dbReference>
<dbReference type="SMR" id="Q04J70"/>
<dbReference type="PaxDb" id="373153-SPD_1512"/>
<dbReference type="KEGG" id="spd:SPD_1512"/>
<dbReference type="eggNOG" id="COG0653">
    <property type="taxonomic scope" value="Bacteria"/>
</dbReference>
<dbReference type="HOGENOM" id="CLU_005314_3_0_9"/>
<dbReference type="BioCyc" id="SPNE373153:G1G6V-1632-MONOMER"/>
<dbReference type="Proteomes" id="UP000001452">
    <property type="component" value="Chromosome"/>
</dbReference>
<dbReference type="GO" id="GO:0031522">
    <property type="term" value="C:cell envelope Sec protein transport complex"/>
    <property type="evidence" value="ECO:0007669"/>
    <property type="project" value="TreeGrafter"/>
</dbReference>
<dbReference type="GO" id="GO:0005829">
    <property type="term" value="C:cytosol"/>
    <property type="evidence" value="ECO:0007669"/>
    <property type="project" value="TreeGrafter"/>
</dbReference>
<dbReference type="GO" id="GO:0005886">
    <property type="term" value="C:plasma membrane"/>
    <property type="evidence" value="ECO:0007669"/>
    <property type="project" value="UniProtKB-SubCell"/>
</dbReference>
<dbReference type="GO" id="GO:0005524">
    <property type="term" value="F:ATP binding"/>
    <property type="evidence" value="ECO:0007669"/>
    <property type="project" value="UniProtKB-UniRule"/>
</dbReference>
<dbReference type="GO" id="GO:0046872">
    <property type="term" value="F:metal ion binding"/>
    <property type="evidence" value="ECO:0007669"/>
    <property type="project" value="UniProtKB-KW"/>
</dbReference>
<dbReference type="GO" id="GO:0008564">
    <property type="term" value="F:protein-exporting ATPase activity"/>
    <property type="evidence" value="ECO:0007669"/>
    <property type="project" value="UniProtKB-EC"/>
</dbReference>
<dbReference type="GO" id="GO:0065002">
    <property type="term" value="P:intracellular protein transmembrane transport"/>
    <property type="evidence" value="ECO:0007669"/>
    <property type="project" value="UniProtKB-UniRule"/>
</dbReference>
<dbReference type="GO" id="GO:0017038">
    <property type="term" value="P:protein import"/>
    <property type="evidence" value="ECO:0007669"/>
    <property type="project" value="InterPro"/>
</dbReference>
<dbReference type="GO" id="GO:0006605">
    <property type="term" value="P:protein targeting"/>
    <property type="evidence" value="ECO:0007669"/>
    <property type="project" value="UniProtKB-UniRule"/>
</dbReference>
<dbReference type="GO" id="GO:0043952">
    <property type="term" value="P:protein transport by the Sec complex"/>
    <property type="evidence" value="ECO:0007669"/>
    <property type="project" value="TreeGrafter"/>
</dbReference>
<dbReference type="CDD" id="cd17928">
    <property type="entry name" value="DEXDc_SecA"/>
    <property type="match status" value="1"/>
</dbReference>
<dbReference type="CDD" id="cd18803">
    <property type="entry name" value="SF2_C_secA"/>
    <property type="match status" value="1"/>
</dbReference>
<dbReference type="FunFam" id="1.10.3060.10:FF:000002">
    <property type="entry name" value="Preprotein translocase subunit SecA"/>
    <property type="match status" value="1"/>
</dbReference>
<dbReference type="FunFam" id="3.40.50.300:FF:000429">
    <property type="entry name" value="Preprotein translocase subunit SecA"/>
    <property type="match status" value="1"/>
</dbReference>
<dbReference type="FunFam" id="3.90.1440.10:FF:000001">
    <property type="entry name" value="Preprotein translocase subunit SecA"/>
    <property type="match status" value="1"/>
</dbReference>
<dbReference type="Gene3D" id="1.10.3060.10">
    <property type="entry name" value="Helical scaffold and wing domains of SecA"/>
    <property type="match status" value="1"/>
</dbReference>
<dbReference type="Gene3D" id="3.40.50.300">
    <property type="entry name" value="P-loop containing nucleotide triphosphate hydrolases"/>
    <property type="match status" value="3"/>
</dbReference>
<dbReference type="Gene3D" id="3.90.1440.10">
    <property type="entry name" value="SecA, preprotein cross-linking domain"/>
    <property type="match status" value="1"/>
</dbReference>
<dbReference type="HAMAP" id="MF_01382">
    <property type="entry name" value="SecA"/>
    <property type="match status" value="1"/>
</dbReference>
<dbReference type="InterPro" id="IPR014001">
    <property type="entry name" value="Helicase_ATP-bd"/>
</dbReference>
<dbReference type="InterPro" id="IPR001650">
    <property type="entry name" value="Helicase_C-like"/>
</dbReference>
<dbReference type="InterPro" id="IPR027417">
    <property type="entry name" value="P-loop_NTPase"/>
</dbReference>
<dbReference type="InterPro" id="IPR004027">
    <property type="entry name" value="SEC_C_motif"/>
</dbReference>
<dbReference type="InterPro" id="IPR000185">
    <property type="entry name" value="SecA"/>
</dbReference>
<dbReference type="InterPro" id="IPR020937">
    <property type="entry name" value="SecA_CS"/>
</dbReference>
<dbReference type="InterPro" id="IPR011115">
    <property type="entry name" value="SecA_DEAD"/>
</dbReference>
<dbReference type="InterPro" id="IPR014018">
    <property type="entry name" value="SecA_motor_DEAD"/>
</dbReference>
<dbReference type="InterPro" id="IPR011130">
    <property type="entry name" value="SecA_preprotein_X-link_dom"/>
</dbReference>
<dbReference type="InterPro" id="IPR044722">
    <property type="entry name" value="SecA_SF2_C"/>
</dbReference>
<dbReference type="InterPro" id="IPR011116">
    <property type="entry name" value="SecA_Wing/Scaffold"/>
</dbReference>
<dbReference type="InterPro" id="IPR036266">
    <property type="entry name" value="SecA_Wing/Scaffold_sf"/>
</dbReference>
<dbReference type="InterPro" id="IPR036670">
    <property type="entry name" value="SecA_X-link_sf"/>
</dbReference>
<dbReference type="NCBIfam" id="NF006630">
    <property type="entry name" value="PRK09200.1"/>
    <property type="match status" value="1"/>
</dbReference>
<dbReference type="NCBIfam" id="TIGR00963">
    <property type="entry name" value="secA"/>
    <property type="match status" value="1"/>
</dbReference>
<dbReference type="PANTHER" id="PTHR30612:SF0">
    <property type="entry name" value="CHLOROPLAST PROTEIN-TRANSPORTING ATPASE"/>
    <property type="match status" value="1"/>
</dbReference>
<dbReference type="PANTHER" id="PTHR30612">
    <property type="entry name" value="SECA INNER MEMBRANE COMPONENT OF SEC PROTEIN SECRETION SYSTEM"/>
    <property type="match status" value="1"/>
</dbReference>
<dbReference type="Pfam" id="PF21090">
    <property type="entry name" value="P-loop_SecA"/>
    <property type="match status" value="2"/>
</dbReference>
<dbReference type="Pfam" id="PF02810">
    <property type="entry name" value="SEC-C"/>
    <property type="match status" value="1"/>
</dbReference>
<dbReference type="Pfam" id="PF07517">
    <property type="entry name" value="SecA_DEAD"/>
    <property type="match status" value="1"/>
</dbReference>
<dbReference type="Pfam" id="PF01043">
    <property type="entry name" value="SecA_PP_bind"/>
    <property type="match status" value="1"/>
</dbReference>
<dbReference type="Pfam" id="PF07516">
    <property type="entry name" value="SecA_SW"/>
    <property type="match status" value="1"/>
</dbReference>
<dbReference type="PRINTS" id="PR00906">
    <property type="entry name" value="SECA"/>
</dbReference>
<dbReference type="SMART" id="SM00957">
    <property type="entry name" value="SecA_DEAD"/>
    <property type="match status" value="1"/>
</dbReference>
<dbReference type="SMART" id="SM00958">
    <property type="entry name" value="SecA_PP_bind"/>
    <property type="match status" value="1"/>
</dbReference>
<dbReference type="SUPFAM" id="SSF81886">
    <property type="entry name" value="Helical scaffold and wing domains of SecA"/>
    <property type="match status" value="1"/>
</dbReference>
<dbReference type="SUPFAM" id="SSF52540">
    <property type="entry name" value="P-loop containing nucleoside triphosphate hydrolases"/>
    <property type="match status" value="2"/>
</dbReference>
<dbReference type="SUPFAM" id="SSF81767">
    <property type="entry name" value="Pre-protein crosslinking domain of SecA"/>
    <property type="match status" value="1"/>
</dbReference>
<dbReference type="PROSITE" id="PS01312">
    <property type="entry name" value="SECA"/>
    <property type="match status" value="1"/>
</dbReference>
<dbReference type="PROSITE" id="PS51196">
    <property type="entry name" value="SECA_MOTOR_DEAD"/>
    <property type="match status" value="1"/>
</dbReference>